<keyword id="KW-1185">Reference proteome</keyword>
<organism>
    <name type="scientific">Rickettsia prowazekii (strain Madrid E)</name>
    <dbReference type="NCBI Taxonomy" id="272947"/>
    <lineage>
        <taxon>Bacteria</taxon>
        <taxon>Pseudomonadati</taxon>
        <taxon>Pseudomonadota</taxon>
        <taxon>Alphaproteobacteria</taxon>
        <taxon>Rickettsiales</taxon>
        <taxon>Rickettsiaceae</taxon>
        <taxon>Rickettsieae</taxon>
        <taxon>Rickettsia</taxon>
        <taxon>typhus group</taxon>
    </lineage>
</organism>
<feature type="chain" id="PRO_0000101345" description="Uncharacterized protein RP277">
    <location>
        <begin position="1"/>
        <end position="228"/>
    </location>
</feature>
<proteinExistence type="predicted"/>
<gene>
    <name type="ordered locus">RP277</name>
</gene>
<name>Y277_RICPR</name>
<sequence>MPFRYKRINIENHNKDELKSLDMMLNQNYFYQNKFEEIKKSYLEDRKAQKDPQYLSDPQLRVIVEKYFEKTAWDLLLNYVIGVKETAFYLASSYINGYGVDQDEFLSHLTLAVGVKLGDEKSIKMLDGEETLPAYIQQFADRCIKEIKKHEAEVQNRDVSCEEIMARAKAFDYFVKTNTNHSYYDTIHEKNNASMKHFSYYVEPIIENNSQDHLEPIGESTKCHCEIC</sequence>
<dbReference type="EMBL" id="AJ235271">
    <property type="protein sequence ID" value="CAA14738.1"/>
    <property type="molecule type" value="Genomic_DNA"/>
</dbReference>
<dbReference type="PIR" id="H71682">
    <property type="entry name" value="H71682"/>
</dbReference>
<dbReference type="RefSeq" id="NP_220661.1">
    <property type="nucleotide sequence ID" value="NC_000963.1"/>
</dbReference>
<dbReference type="RefSeq" id="WP_004597345.1">
    <property type="nucleotide sequence ID" value="NC_000963.1"/>
</dbReference>
<dbReference type="SMR" id="Q9ZDQ0"/>
<dbReference type="EnsemblBacteria" id="CAA14738">
    <property type="protein sequence ID" value="CAA14738"/>
    <property type="gene ID" value="CAA14738"/>
</dbReference>
<dbReference type="KEGG" id="rpr:RP277"/>
<dbReference type="PATRIC" id="fig|272947.5.peg.283"/>
<dbReference type="HOGENOM" id="CLU_1214067_0_0_5"/>
<dbReference type="OrthoDB" id="9877901at2"/>
<dbReference type="Proteomes" id="UP000002480">
    <property type="component" value="Chromosome"/>
</dbReference>
<accession>Q9ZDQ0</accession>
<protein>
    <recommendedName>
        <fullName>Uncharacterized protein RP277</fullName>
    </recommendedName>
</protein>
<reference key="1">
    <citation type="journal article" date="1998" name="Nature">
        <title>The genome sequence of Rickettsia prowazekii and the origin of mitochondria.</title>
        <authorList>
            <person name="Andersson S.G.E."/>
            <person name="Zomorodipour A."/>
            <person name="Andersson J.O."/>
            <person name="Sicheritz-Ponten T."/>
            <person name="Alsmark U.C.M."/>
            <person name="Podowski R.M."/>
            <person name="Naeslund A.K."/>
            <person name="Eriksson A.-S."/>
            <person name="Winkler H.H."/>
            <person name="Kurland C.G."/>
        </authorList>
    </citation>
    <scope>NUCLEOTIDE SEQUENCE [LARGE SCALE GENOMIC DNA]</scope>
    <source>
        <strain>Madrid E</strain>
    </source>
</reference>